<protein>
    <recommendedName>
        <fullName evidence="1">Integration host factor subunit beta</fullName>
        <shortName evidence="1">IHF-beta</shortName>
    </recommendedName>
</protein>
<proteinExistence type="inferred from homology"/>
<comment type="function">
    <text evidence="1">This protein is one of the two subunits of integration host factor, a specific DNA-binding protein that functions in genetic recombination as well as in transcriptional and translational control.</text>
</comment>
<comment type="subunit">
    <text evidence="1">Heterodimer of an alpha and a beta chain.</text>
</comment>
<comment type="similarity">
    <text evidence="1">Belongs to the bacterial histone-like protein family.</text>
</comment>
<accession>B6JCN9</accession>
<accession>F8C095</accession>
<gene>
    <name evidence="1" type="primary">ihfB</name>
    <name evidence="1" type="synonym">himD</name>
    <name type="ordered locus">OCAR_4474</name>
    <name type="ordered locus">OCA5_c00600</name>
</gene>
<reference key="1">
    <citation type="journal article" date="2008" name="J. Bacteriol.">
        <title>Genome sequence of the chemolithoautotrophic bacterium Oligotropha carboxidovorans OM5T.</title>
        <authorList>
            <person name="Paul D."/>
            <person name="Bridges S."/>
            <person name="Burgess S.C."/>
            <person name="Dandass Y."/>
            <person name="Lawrence M.L."/>
        </authorList>
    </citation>
    <scope>NUCLEOTIDE SEQUENCE [LARGE SCALE GENOMIC DNA]</scope>
    <source>
        <strain>ATCC 49405 / DSM 1227 / KCTC 32145 / OM5</strain>
    </source>
</reference>
<reference key="2">
    <citation type="journal article" date="2011" name="J. Bacteriol.">
        <title>Complete genome sequences of the chemolithoautotrophic Oligotropha carboxidovorans strains OM4 and OM5.</title>
        <authorList>
            <person name="Volland S."/>
            <person name="Rachinger M."/>
            <person name="Strittmatter A."/>
            <person name="Daniel R."/>
            <person name="Gottschalk G."/>
            <person name="Meyer O."/>
        </authorList>
    </citation>
    <scope>NUCLEOTIDE SEQUENCE [LARGE SCALE GENOMIC DNA]</scope>
    <source>
        <strain>ATCC 49405 / DSM 1227 / KCTC 32145 / OM5</strain>
    </source>
</reference>
<feature type="chain" id="PRO_1000122224" description="Integration host factor subunit beta">
    <location>
        <begin position="1"/>
        <end position="106"/>
    </location>
</feature>
<feature type="region of interest" description="Disordered" evidence="2">
    <location>
        <begin position="57"/>
        <end position="106"/>
    </location>
</feature>
<feature type="compositionally biased region" description="Basic and acidic residues" evidence="2">
    <location>
        <begin position="82"/>
        <end position="95"/>
    </location>
</feature>
<sequence>MIKSELVQRIAEHNPHLYQRDVENIVNAILEEIVSALARGDRVELRGFGAFSVKHRPARAGRNPRTGEHVPVEQKSVPFFKTGKEMRERLNRDGLDGATPPSPPAA</sequence>
<name>IHFB_AFIC5</name>
<keyword id="KW-0233">DNA recombination</keyword>
<keyword id="KW-0238">DNA-binding</keyword>
<keyword id="KW-1185">Reference proteome</keyword>
<keyword id="KW-0804">Transcription</keyword>
<keyword id="KW-0805">Transcription regulation</keyword>
<keyword id="KW-0810">Translation regulation</keyword>
<dbReference type="EMBL" id="CP001196">
    <property type="protein sequence ID" value="ACI91619.1"/>
    <property type="molecule type" value="Genomic_DNA"/>
</dbReference>
<dbReference type="EMBL" id="CP002826">
    <property type="protein sequence ID" value="AEI04794.1"/>
    <property type="molecule type" value="Genomic_DNA"/>
</dbReference>
<dbReference type="RefSeq" id="WP_012561650.1">
    <property type="nucleotide sequence ID" value="NC_015684.1"/>
</dbReference>
<dbReference type="SMR" id="B6JCN9"/>
<dbReference type="STRING" id="504832.OCA5_c00600"/>
<dbReference type="KEGG" id="oca:OCAR_4474"/>
<dbReference type="KEGG" id="ocg:OCA5_c00600"/>
<dbReference type="PATRIC" id="fig|504832.7.peg.63"/>
<dbReference type="eggNOG" id="COG0776">
    <property type="taxonomic scope" value="Bacteria"/>
</dbReference>
<dbReference type="HOGENOM" id="CLU_105066_2_1_5"/>
<dbReference type="OrthoDB" id="9804203at2"/>
<dbReference type="Proteomes" id="UP000007730">
    <property type="component" value="Chromosome"/>
</dbReference>
<dbReference type="GO" id="GO:0005694">
    <property type="term" value="C:chromosome"/>
    <property type="evidence" value="ECO:0007669"/>
    <property type="project" value="InterPro"/>
</dbReference>
<dbReference type="GO" id="GO:0005829">
    <property type="term" value="C:cytosol"/>
    <property type="evidence" value="ECO:0007669"/>
    <property type="project" value="TreeGrafter"/>
</dbReference>
<dbReference type="GO" id="GO:0003677">
    <property type="term" value="F:DNA binding"/>
    <property type="evidence" value="ECO:0007669"/>
    <property type="project" value="UniProtKB-UniRule"/>
</dbReference>
<dbReference type="GO" id="GO:0030527">
    <property type="term" value="F:structural constituent of chromatin"/>
    <property type="evidence" value="ECO:0007669"/>
    <property type="project" value="InterPro"/>
</dbReference>
<dbReference type="GO" id="GO:0006310">
    <property type="term" value="P:DNA recombination"/>
    <property type="evidence" value="ECO:0007669"/>
    <property type="project" value="UniProtKB-UniRule"/>
</dbReference>
<dbReference type="GO" id="GO:0006355">
    <property type="term" value="P:regulation of DNA-templated transcription"/>
    <property type="evidence" value="ECO:0007669"/>
    <property type="project" value="UniProtKB-UniRule"/>
</dbReference>
<dbReference type="GO" id="GO:0006417">
    <property type="term" value="P:regulation of translation"/>
    <property type="evidence" value="ECO:0007669"/>
    <property type="project" value="UniProtKB-UniRule"/>
</dbReference>
<dbReference type="CDD" id="cd13836">
    <property type="entry name" value="IHF_B"/>
    <property type="match status" value="1"/>
</dbReference>
<dbReference type="FunFam" id="4.10.520.10:FF:000008">
    <property type="entry name" value="Integration host factor subunit beta"/>
    <property type="match status" value="1"/>
</dbReference>
<dbReference type="Gene3D" id="4.10.520.10">
    <property type="entry name" value="IHF-like DNA-binding proteins"/>
    <property type="match status" value="1"/>
</dbReference>
<dbReference type="HAMAP" id="MF_00381">
    <property type="entry name" value="IHF_beta"/>
    <property type="match status" value="1"/>
</dbReference>
<dbReference type="InterPro" id="IPR000119">
    <property type="entry name" value="Hist_DNA-bd"/>
</dbReference>
<dbReference type="InterPro" id="IPR020816">
    <property type="entry name" value="Histone-like_DNA-bd_CS"/>
</dbReference>
<dbReference type="InterPro" id="IPR010992">
    <property type="entry name" value="IHF-like_DNA-bd_dom_sf"/>
</dbReference>
<dbReference type="InterPro" id="IPR005685">
    <property type="entry name" value="IHF_beta"/>
</dbReference>
<dbReference type="NCBIfam" id="TIGR00988">
    <property type="entry name" value="hip"/>
    <property type="match status" value="1"/>
</dbReference>
<dbReference type="NCBIfam" id="NF001222">
    <property type="entry name" value="PRK00199.1"/>
    <property type="match status" value="1"/>
</dbReference>
<dbReference type="PANTHER" id="PTHR33175">
    <property type="entry name" value="DNA-BINDING PROTEIN HU"/>
    <property type="match status" value="1"/>
</dbReference>
<dbReference type="PANTHER" id="PTHR33175:SF5">
    <property type="entry name" value="INTEGRATION HOST FACTOR SUBUNIT BETA"/>
    <property type="match status" value="1"/>
</dbReference>
<dbReference type="Pfam" id="PF00216">
    <property type="entry name" value="Bac_DNA_binding"/>
    <property type="match status" value="1"/>
</dbReference>
<dbReference type="PRINTS" id="PR01727">
    <property type="entry name" value="DNABINDINGHU"/>
</dbReference>
<dbReference type="SMART" id="SM00411">
    <property type="entry name" value="BHL"/>
    <property type="match status" value="1"/>
</dbReference>
<dbReference type="SUPFAM" id="SSF47729">
    <property type="entry name" value="IHF-like DNA-binding proteins"/>
    <property type="match status" value="1"/>
</dbReference>
<dbReference type="PROSITE" id="PS00045">
    <property type="entry name" value="HISTONE_LIKE"/>
    <property type="match status" value="1"/>
</dbReference>
<organism>
    <name type="scientific">Afipia carboxidovorans (strain ATCC 49405 / DSM 1227 / KCTC 32145 / OM5)</name>
    <name type="common">Oligotropha carboxidovorans</name>
    <dbReference type="NCBI Taxonomy" id="504832"/>
    <lineage>
        <taxon>Bacteria</taxon>
        <taxon>Pseudomonadati</taxon>
        <taxon>Pseudomonadota</taxon>
        <taxon>Alphaproteobacteria</taxon>
        <taxon>Hyphomicrobiales</taxon>
        <taxon>Nitrobacteraceae</taxon>
        <taxon>Afipia</taxon>
    </lineage>
</organism>
<evidence type="ECO:0000255" key="1">
    <source>
        <dbReference type="HAMAP-Rule" id="MF_00381"/>
    </source>
</evidence>
<evidence type="ECO:0000256" key="2">
    <source>
        <dbReference type="SAM" id="MobiDB-lite"/>
    </source>
</evidence>